<gene>
    <name evidence="9" type="primary">ftnA</name>
    <name evidence="8" type="synonym">bfrA</name>
    <name type="ordered locus">PA4235</name>
</gene>
<feature type="chain" id="PRO_0000287751" description="Bacterial ferritin">
    <location>
        <begin position="1"/>
        <end position="154"/>
    </location>
</feature>
<feature type="domain" description="Ferritin-like diiron" evidence="2">
    <location>
        <begin position="1"/>
        <end position="145"/>
    </location>
</feature>
<feature type="binding site" evidence="4 18 19 21 22">
    <location>
        <position position="18"/>
    </location>
    <ligand>
        <name>Fe(3+)</name>
        <dbReference type="ChEBI" id="CHEBI:29034"/>
        <label>A</label>
    </ligand>
</feature>
<feature type="binding site" evidence="4 18 19 21">
    <location>
        <position position="46"/>
    </location>
    <ligand>
        <name>Fe(3+)</name>
        <dbReference type="ChEBI" id="CHEBI:29034"/>
        <label>C</label>
    </ligand>
</feature>
<feature type="binding site" evidence="4 18 22">
    <location>
        <position position="47"/>
    </location>
    <ligand>
        <name>Fe(3+)</name>
        <dbReference type="ChEBI" id="CHEBI:29034"/>
        <label>D</label>
    </ligand>
</feature>
<feature type="binding site" evidence="4 18 19 21">
    <location>
        <position position="50"/>
    </location>
    <ligand>
        <name>Fe(3+)</name>
        <dbReference type="ChEBI" id="CHEBI:29034"/>
        <label>C</label>
    </ligand>
</feature>
<feature type="binding site" evidence="4 18">
    <location>
        <position position="50"/>
    </location>
    <ligand>
        <name>Fe(3+)</name>
        <dbReference type="ChEBI" id="CHEBI:29034"/>
        <label>D</label>
    </ligand>
</feature>
<feature type="binding site" evidence="4 18 22">
    <location>
        <position position="50"/>
    </location>
    <ligand>
        <name>Fe(3+)</name>
        <dbReference type="ChEBI" id="CHEBI:29034"/>
        <label>E</label>
    </ligand>
</feature>
<feature type="binding site" evidence="4 18 19 21 22">
    <location>
        <position position="51"/>
    </location>
    <ligand>
        <name>Fe(3+)</name>
        <dbReference type="ChEBI" id="CHEBI:29034"/>
        <label>A</label>
    </ligand>
</feature>
<feature type="binding site" evidence="4 18 19 21 22">
    <location>
        <position position="51"/>
    </location>
    <ligand>
        <name>Fe(3+)</name>
        <dbReference type="ChEBI" id="CHEBI:29034"/>
        <label>B</label>
    </ligand>
</feature>
<feature type="binding site" evidence="4 18 19 21 22">
    <location>
        <position position="54"/>
    </location>
    <ligand>
        <name>Fe(3+)</name>
        <dbReference type="ChEBI" id="CHEBI:29034"/>
        <label>A</label>
    </ligand>
</feature>
<feature type="binding site" evidence="4 18 19 21 22">
    <location>
        <position position="93"/>
    </location>
    <ligand>
        <name>Fe(3+)</name>
        <dbReference type="ChEBI" id="CHEBI:29034"/>
        <label>B</label>
    </ligand>
</feature>
<feature type="binding site" evidence="4 18">
    <location>
        <position position="129"/>
    </location>
    <ligand>
        <name>Fe(3+)</name>
        <dbReference type="ChEBI" id="CHEBI:29034"/>
        <label>D</label>
    </ligand>
</feature>
<feature type="binding site" evidence="4 18 22">
    <location>
        <position position="129"/>
    </location>
    <ligand>
        <name>Fe(3+)</name>
        <dbReference type="ChEBI" id="CHEBI:29034"/>
        <label>E</label>
    </ligand>
</feature>
<feature type="binding site" evidence="4 18 19 21 22">
    <location>
        <position position="130"/>
    </location>
    <ligand>
        <name>Fe(3+)</name>
        <dbReference type="ChEBI" id="CHEBI:29034"/>
        <label>B</label>
    </ligand>
</feature>
<feature type="site" description="Dual function in ferroxidase center and iron gate" evidence="13">
    <location>
        <position position="130"/>
    </location>
</feature>
<feature type="mutagenesis site" description="Does not complement ftnA gene disruption, only about 60% catalase activity in strain PAO1." evidence="3">
    <original>E</original>
    <variation>K</variation>
    <location>
        <position position="18"/>
    </location>
</feature>
<feature type="mutagenesis site" description="Does not complement ftnA gene disruption, only about 60% catalase activity in strain PAO1." evidence="3">
    <original>Y</original>
    <variation>I</variation>
    <location>
        <position position="25"/>
    </location>
</feature>
<feature type="helix" evidence="23">
    <location>
        <begin position="5"/>
        <end position="34"/>
    </location>
</feature>
<feature type="helix" evidence="23">
    <location>
        <begin position="38"/>
        <end position="64"/>
    </location>
</feature>
<feature type="helix" evidence="23">
    <location>
        <begin position="82"/>
        <end position="109"/>
    </location>
</feature>
<feature type="helix" evidence="23">
    <location>
        <begin position="113"/>
        <end position="128"/>
    </location>
</feature>
<feature type="helix" evidence="23">
    <location>
        <begin position="130"/>
        <end position="144"/>
    </location>
</feature>
<feature type="helix" evidence="23">
    <location>
        <begin position="146"/>
        <end position="152"/>
    </location>
</feature>
<protein>
    <recommendedName>
        <fullName evidence="9">Bacterial ferritin</fullName>
        <shortName evidence="9">FtnA</shortName>
        <ecNumber evidence="4">1.16.3.1</ecNumber>
    </recommendedName>
    <alternativeName>
        <fullName evidence="1">Bacterial non-heme ferritin</fullName>
    </alternativeName>
    <alternativeName>
        <fullName evidence="11">Bacterioferritin alpha subunit</fullName>
        <shortName evidence="11">BFR alpha subunit</shortName>
    </alternativeName>
    <alternativeName>
        <fullName evidence="10">Nonheme-iron-containing cytochrome b557</fullName>
    </alternativeName>
</protein>
<comment type="function">
    <text evidence="3 4 6 7 13">Plays a role in catalase A (katA) expression; activity is required for optimal KatA activity and resistance to H(2)O(2) (PubMed:10368148). Iron-storage protein that is part of the heterooligomeric bacterioferritin (BFR) complex (PubMed:35327558, PubMed:7998985). The ferroxidase center binds Fe(2+), oxidizes it using dioxygen to Fe(3+), and participates in subsequent Fe(3+) oxide mineral core formation within the central cavity of the BFR protein shell (PubMed:21574546). Can store up to 520 iron atoms per ferritin protein molecule (PubMed:21574546). Iron release requires only the input of electrons from ferredoxin NADP reductase (FPR), does not require Bfd (PubMed:21574546). Does not bind heme (PubMed:21574546).</text>
</comment>
<comment type="catalytic activity">
    <reaction evidence="4">
        <text>4 Fe(2+) + O2 + 4 H(+) = 4 Fe(3+) + 2 H2O</text>
        <dbReference type="Rhea" id="RHEA:11148"/>
        <dbReference type="ChEBI" id="CHEBI:15377"/>
        <dbReference type="ChEBI" id="CHEBI:15378"/>
        <dbReference type="ChEBI" id="CHEBI:15379"/>
        <dbReference type="ChEBI" id="CHEBI:29033"/>
        <dbReference type="ChEBI" id="CHEBI:29034"/>
        <dbReference type="EC" id="1.16.3.1"/>
    </reaction>
    <physiologicalReaction direction="left-to-right" evidence="4">
        <dbReference type="Rhea" id="RHEA:11149"/>
    </physiologicalReaction>
    <physiologicalReaction direction="right-to-left" evidence="13">
        <dbReference type="Rhea" id="RHEA:11150"/>
    </physiologicalReaction>
</comment>
<comment type="catalytic activity">
    <reaction evidence="4">
        <text>Fe(2+)(in) = Fe(2+)(out)</text>
        <dbReference type="Rhea" id="RHEA:28486"/>
        <dbReference type="ChEBI" id="CHEBI:29033"/>
    </reaction>
</comment>
<comment type="subunit">
    <text evidence="4 5 6 7">The bacterioferritin (BFR) complex is formed of 24 subunits (FtnA and BfrB) arranged as 12 homodimers (PubMed:35327558, PubMed:7998985). The holocomplex contains about 8.7% Fe and 8.0% phosphate (PubMed:3100721). In vivo purifies with BfrB in varying ratios, depending on the O(2) content; as O(2) decreases FtnA content rises (PubMed:35327558, PubMed:7998985). Pure FtnA BFR complexes are not isolated in situ, although in a bfrB deletion some iron will accumulate in FtnA ferritin complexes (PubMed:35327558). Upon crystallization forms homooligomers of 24 subunits, the BFR complex, arranged as 12 dimers, that are packed together to form an approximately spherical molecule with a central cavity, in which large amounts of iron can be deposited (PubMed:21574546). The BFR shell has three- and four-fold pores; Fe(2+) may move in and out of the shell via the four-fold pores (Probable) (PubMed:21574546). Does not interact with Bfd (PubMed:35327558).</text>
</comment>
<comment type="subcellular location">
    <subcellularLocation>
        <location evidence="6 7">Cytoplasm</location>
    </subcellularLocation>
</comment>
<comment type="induction">
    <text evidence="3">Transcription is up-regulated by FeCl(3) and H(2)O(2) (PubMed:10368148).</text>
</comment>
<comment type="mass spectrometry">
    <text>Isolated from BFR in vivo.</text>
</comment>
<comment type="disruption phenotype">
    <text evidence="3 6">Produces about half the wild-type levels of catalase A in strain PAO1 (katA), slight increase in sensitivity to H(2)O(2), a double katA-ftnA deletion is more sensitive to H(2)O(2) (PubMed:10368148). When grown in iron-limiting conditions is less sensitive to H(2)O(2) (PubMed:10368148). BFR complexes are composed only of BfrB (PubMed:35327558).</text>
</comment>
<comment type="miscellaneous">
    <text evidence="4">Binds up to 5 iron ions per subunit depending on the protein state; aside from Fe(3+)A and in some structures Fe(3+)B, the other sites are approximately half-occupied (PubMed:21574546). The unstable catalytic dinuclear iron-binding site within each subunit (probably Fe(3+)A and Fe(3+)B) is known as the ferroxidase center; it is labile (PubMed:21574546).</text>
</comment>
<comment type="similarity">
    <text evidence="13">Belongs to the bacterioferritin family.</text>
</comment>
<comment type="caution">
    <text evidence="4 12">Was originally thought to be a bacterioferritin (PubMed:10984043). Its inability to bind heme shows it is actually a bacterial ferritin (PubMed:21574546).</text>
</comment>
<dbReference type="EC" id="1.16.3.1" evidence="4"/>
<dbReference type="EMBL" id="AF047025">
    <property type="protein sequence ID" value="AAC03119.1"/>
    <property type="molecule type" value="Genomic_DNA"/>
</dbReference>
<dbReference type="EMBL" id="AE004091">
    <property type="protein sequence ID" value="AAG07623.1"/>
    <property type="molecule type" value="Genomic_DNA"/>
</dbReference>
<dbReference type="PIR" id="A83113">
    <property type="entry name" value="A83113"/>
</dbReference>
<dbReference type="RefSeq" id="NP_252925.1">
    <property type="nucleotide sequence ID" value="NC_002516.2"/>
</dbReference>
<dbReference type="PDB" id="3R2H">
    <property type="method" value="X-ray"/>
    <property type="resolution" value="1.70 A"/>
    <property type="chains" value="A=1-154"/>
</dbReference>
<dbReference type="PDB" id="3R2K">
    <property type="method" value="X-ray"/>
    <property type="resolution" value="1.55 A"/>
    <property type="chains" value="A=1-154"/>
</dbReference>
<dbReference type="PDB" id="3R2L">
    <property type="method" value="X-ray"/>
    <property type="resolution" value="1.85 A"/>
    <property type="chains" value="A=1-154"/>
</dbReference>
<dbReference type="PDB" id="3R2M">
    <property type="method" value="X-ray"/>
    <property type="resolution" value="1.80 A"/>
    <property type="chains" value="A=1-154"/>
</dbReference>
<dbReference type="PDB" id="3R2O">
    <property type="method" value="X-ray"/>
    <property type="resolution" value="1.95 A"/>
    <property type="chains" value="A=1-154"/>
</dbReference>
<dbReference type="PDB" id="3R2R">
    <property type="method" value="X-ray"/>
    <property type="resolution" value="1.65 A"/>
    <property type="chains" value="A=1-154"/>
</dbReference>
<dbReference type="PDB" id="3R2S">
    <property type="method" value="X-ray"/>
    <property type="resolution" value="2.10 A"/>
    <property type="chains" value="A=1-154"/>
</dbReference>
<dbReference type="PDBsum" id="3R2H"/>
<dbReference type="PDBsum" id="3R2K"/>
<dbReference type="PDBsum" id="3R2L"/>
<dbReference type="PDBsum" id="3R2M"/>
<dbReference type="PDBsum" id="3R2O"/>
<dbReference type="PDBsum" id="3R2R"/>
<dbReference type="PDBsum" id="3R2S"/>
<dbReference type="SMR" id="Q9HWF9"/>
<dbReference type="STRING" id="208964.PA4235"/>
<dbReference type="PaxDb" id="208964-PA4235"/>
<dbReference type="GeneID" id="881830"/>
<dbReference type="KEGG" id="pae:PA4235"/>
<dbReference type="PATRIC" id="fig|208964.12.peg.4436"/>
<dbReference type="PseudoCAP" id="PA4235"/>
<dbReference type="HOGENOM" id="CLU_104506_2_0_6"/>
<dbReference type="InParanoid" id="Q9HWF9"/>
<dbReference type="OrthoDB" id="9800505at2"/>
<dbReference type="PhylomeDB" id="Q9HWF9"/>
<dbReference type="BioCyc" id="PAER208964:G1FZ6-4308-MONOMER"/>
<dbReference type="EvolutionaryTrace" id="Q9HWF9"/>
<dbReference type="Proteomes" id="UP000002438">
    <property type="component" value="Chromosome"/>
</dbReference>
<dbReference type="GO" id="GO:0005829">
    <property type="term" value="C:cytosol"/>
    <property type="evidence" value="ECO:0000318"/>
    <property type="project" value="GO_Central"/>
</dbReference>
<dbReference type="GO" id="GO:0008199">
    <property type="term" value="F:ferric iron binding"/>
    <property type="evidence" value="ECO:0007669"/>
    <property type="project" value="InterPro"/>
</dbReference>
<dbReference type="GO" id="GO:0004322">
    <property type="term" value="F:ferroxidase activity"/>
    <property type="evidence" value="ECO:0000314"/>
    <property type="project" value="UniProtKB"/>
</dbReference>
<dbReference type="GO" id="GO:0020037">
    <property type="term" value="F:heme binding"/>
    <property type="evidence" value="ECO:0000318"/>
    <property type="project" value="GO_Central"/>
</dbReference>
<dbReference type="GO" id="GO:0005506">
    <property type="term" value="F:iron ion binding"/>
    <property type="evidence" value="ECO:0000314"/>
    <property type="project" value="UniProtKB"/>
</dbReference>
<dbReference type="GO" id="GO:0140315">
    <property type="term" value="F:iron ion sequestering activity"/>
    <property type="evidence" value="ECO:0000314"/>
    <property type="project" value="UniProtKB"/>
</dbReference>
<dbReference type="GO" id="GO:0006879">
    <property type="term" value="P:intracellular iron ion homeostasis"/>
    <property type="evidence" value="ECO:0007669"/>
    <property type="project" value="UniProtKB-KW"/>
</dbReference>
<dbReference type="GO" id="GO:0006826">
    <property type="term" value="P:iron ion transport"/>
    <property type="evidence" value="ECO:0000314"/>
    <property type="project" value="UniProtKB"/>
</dbReference>
<dbReference type="CDD" id="cd00907">
    <property type="entry name" value="Bacterioferritin"/>
    <property type="match status" value="1"/>
</dbReference>
<dbReference type="FunFam" id="1.20.1260.10:FF:000005">
    <property type="entry name" value="Bacterioferritin"/>
    <property type="match status" value="1"/>
</dbReference>
<dbReference type="Gene3D" id="1.20.1260.10">
    <property type="match status" value="1"/>
</dbReference>
<dbReference type="InterPro" id="IPR002024">
    <property type="entry name" value="Bacterioferritin"/>
</dbReference>
<dbReference type="InterPro" id="IPR012347">
    <property type="entry name" value="Ferritin-like"/>
</dbReference>
<dbReference type="InterPro" id="IPR009040">
    <property type="entry name" value="Ferritin-like_diiron"/>
</dbReference>
<dbReference type="InterPro" id="IPR009078">
    <property type="entry name" value="Ferritin-like_SF"/>
</dbReference>
<dbReference type="InterPro" id="IPR008331">
    <property type="entry name" value="Ferritin_DPS_dom"/>
</dbReference>
<dbReference type="NCBIfam" id="TIGR00754">
    <property type="entry name" value="bfr"/>
    <property type="match status" value="1"/>
</dbReference>
<dbReference type="PANTHER" id="PTHR30295">
    <property type="entry name" value="BACTERIOFERRITIN"/>
    <property type="match status" value="1"/>
</dbReference>
<dbReference type="PANTHER" id="PTHR30295:SF9">
    <property type="entry name" value="BACTERIOFERRITIN"/>
    <property type="match status" value="1"/>
</dbReference>
<dbReference type="Pfam" id="PF00210">
    <property type="entry name" value="Ferritin"/>
    <property type="match status" value="1"/>
</dbReference>
<dbReference type="PIRSF" id="PIRSF002560">
    <property type="entry name" value="Bacterioferritin"/>
    <property type="match status" value="1"/>
</dbReference>
<dbReference type="PRINTS" id="PR00601">
    <property type="entry name" value="BACFERRITIN"/>
</dbReference>
<dbReference type="SUPFAM" id="SSF47240">
    <property type="entry name" value="Ferritin-like"/>
    <property type="match status" value="1"/>
</dbReference>
<dbReference type="PROSITE" id="PS00549">
    <property type="entry name" value="BACTERIOFERRITIN"/>
    <property type="match status" value="1"/>
</dbReference>
<dbReference type="PROSITE" id="PS50905">
    <property type="entry name" value="FERRITIN_LIKE"/>
    <property type="match status" value="1"/>
</dbReference>
<reference evidence="15" key="1">
    <citation type="journal article" date="2000" name="Nature">
        <title>Complete genome sequence of Pseudomonas aeruginosa PAO1, an opportunistic pathogen.</title>
        <authorList>
            <person name="Stover C.K."/>
            <person name="Pham X.-Q.T."/>
            <person name="Erwin A.L."/>
            <person name="Mizoguchi S.D."/>
            <person name="Warrener P."/>
            <person name="Hickey M.J."/>
            <person name="Brinkman F.S.L."/>
            <person name="Hufnagle W.O."/>
            <person name="Kowalik D.J."/>
            <person name="Lagrou M."/>
            <person name="Garber R.L."/>
            <person name="Goltry L."/>
            <person name="Tolentino E."/>
            <person name="Westbrock-Wadman S."/>
            <person name="Yuan Y."/>
            <person name="Brody L.L."/>
            <person name="Coulter S.N."/>
            <person name="Folger K.R."/>
            <person name="Kas A."/>
            <person name="Larbig K."/>
            <person name="Lim R.M."/>
            <person name="Smith K.A."/>
            <person name="Spencer D.H."/>
            <person name="Wong G.K.-S."/>
            <person name="Wu Z."/>
            <person name="Paulsen I.T."/>
            <person name="Reizer J."/>
            <person name="Saier M.H. Jr."/>
            <person name="Hancock R.E.W."/>
            <person name="Lory S."/>
            <person name="Olson M.V."/>
        </authorList>
    </citation>
    <scope>NUCLEOTIDE SEQUENCE [LARGE SCALE GENOMIC DNA]</scope>
    <source>
        <strain>ATCC 15692 / DSM 22644 / CIP 104116 / JCM 14847 / LMG 12228 / 1C / PRS 101 / PAO1</strain>
    </source>
</reference>
<reference evidence="14" key="2">
    <citation type="journal article" date="1999" name="J. Bacteriol.">
        <title>Bacterioferritin A modulates catalase A (KatA) activity and resistance to hydrogen peroxide in Pseudomonas aeruginosa.</title>
        <authorList>
            <person name="Ma J.-F."/>
            <person name="Ochsner U.A."/>
            <person name="Klotz M.G."/>
            <person name="Nanayakkara V.K."/>
            <person name="Howell M.L."/>
            <person name="Johnson Z."/>
            <person name="Posey J.E."/>
            <person name="Vasil M.L."/>
            <person name="Monaco J.J."/>
            <person name="Hassett D.J."/>
        </authorList>
    </citation>
    <scope>NUCLEOTIDE SEQUENCE [GENOMIC DNA] OF 1-77</scope>
    <scope>FUNCTION</scope>
    <scope>INDUCTION BY IRON AND H(2)O(2)</scope>
    <scope>DISRUPTION PHENOTYPE</scope>
    <scope>MUTAGENESIS OF GLU-18 AND TYR-25</scope>
    <source>
        <strain>ATCC 15692 / DSM 22644 / CIP 104116 / JCM 14847 / LMG 12228 / 1C / PRS 101 / PAO1</strain>
        <strain evidence="14">FRD1</strain>
    </source>
</reference>
<reference key="3">
    <citation type="journal article" date="1994" name="Biochem. J.">
        <title>Structural heterogeneity of Pseudomonas aeruginosa bacterioferritin.</title>
        <authorList>
            <person name="Moore G.R."/>
            <person name="Kadir F.H."/>
            <person name="al-Massad F.K."/>
            <person name="Le Brun N.E."/>
            <person name="Thomson A.J."/>
            <person name="Greenwood C."/>
            <person name="Keen J.N."/>
            <person name="Findlay J.B."/>
        </authorList>
    </citation>
    <scope>PROTEIN SEQUENCE OF 1-69</scope>
    <scope>SUBUNIT</scope>
    <scope>SUBCELLULAR LOCATION</scope>
    <source>
        <strain>ATCC 19429 / DSM 3227 / NBRC 3755 / NCIMB 6750 / NCTC 6750</strain>
    </source>
</reference>
<reference key="4">
    <citation type="journal article" date="1986" name="J. Inorg. Biochem.">
        <title>Isolation and properties of the complex nonheme-iron-containing cytochrome b557 (bacterioferritin) from Pseudomonas aeruginosa.</title>
        <authorList>
            <person name="Moore G.R."/>
            <person name="Mann S."/>
            <person name="Bannister J.V."/>
        </authorList>
    </citation>
    <scope>SUBUNIT</scope>
</reference>
<reference key="5">
    <citation type="journal article" date="2022" name="Biomolecules">
        <title>Pseudomonas aeruginosa Bacterioferritin Is Assembled from FtnA and BfrB Subunits with the Relative Proportions Dependent on the Environmental Oxygen Availability.</title>
        <authorList>
            <person name="Yao H."/>
            <person name="Soldano A."/>
            <person name="Fontenot L."/>
            <person name="Donnarumma F."/>
            <person name="Lovell S."/>
            <person name="Chandler J.R."/>
            <person name="Rivera M."/>
        </authorList>
    </citation>
    <scope>SUBUNIT</scope>
    <scope>DOES NOT INTERACT WITH BFD</scope>
    <scope>MASS SPECTROMETRY</scope>
    <scope>SUBCELLULAR LOCATION</scope>
    <scope>DISRUPTION PHENOTYPE</scope>
    <source>
        <strain>ATCC 15692 / DSM 22644 / CIP 104116 / JCM 14847 / LMG 12228 / 1C / PRS 101 / PAO1</strain>
    </source>
</reference>
<reference evidence="16 17 18 19 20 21 22" key="6">
    <citation type="journal article" date="2011" name="Biochemistry">
        <title>Two distinct ferritin-like molecules in Pseudomonas aeruginosa: the product of the bfrA gene is a bacterial ferritin (FtnA) and not a bacterioferritin (Bfr).</title>
        <authorList>
            <person name="Yao H."/>
            <person name="Jepkorir G."/>
            <person name="Lovell S."/>
            <person name="Nama P.V."/>
            <person name="Weeratunga S."/>
            <person name="Battaile K.P."/>
            <person name="Rivera M."/>
        </authorList>
    </citation>
    <scope>X-RAY CRYSTALLOGRAPHY (1.55 ANGSTROMS) WITH AND WITHOUT FE(3+)</scope>
    <scope>FUNCTION</scope>
    <scope>CATALYTIC ACTIVITY</scope>
    <scope>DOES NOT BIND HEME</scope>
    <scope>SUBUNIT</scope>
</reference>
<keyword id="KW-0002">3D-structure</keyword>
<keyword id="KW-0963">Cytoplasm</keyword>
<keyword id="KW-0903">Direct protein sequencing</keyword>
<keyword id="KW-0406">Ion transport</keyword>
<keyword id="KW-0408">Iron</keyword>
<keyword id="KW-0409">Iron storage</keyword>
<keyword id="KW-0410">Iron transport</keyword>
<keyword id="KW-0479">Metal-binding</keyword>
<keyword id="KW-0560">Oxidoreductase</keyword>
<keyword id="KW-1185">Reference proteome</keyword>
<keyword id="KW-0813">Transport</keyword>
<sequence>MQGHPEVIDYLNTLLTGELAARDQYFIHSRMYEDWGFSKLYERLNHEMEEETQHADALLRRILLLEGTPRMRPDDIHPGTTVPEMLEADLKLERHVRAALAKGIALCEQHKDFVSRDILKAQLADTEEDHAYWLEQQLGLIARMGLENYLQSQI</sequence>
<proteinExistence type="evidence at protein level"/>
<organism>
    <name type="scientific">Pseudomonas aeruginosa (strain ATCC 15692 / DSM 22644 / CIP 104116 / JCM 14847 / LMG 12228 / 1C / PRS 101 / PAO1)</name>
    <dbReference type="NCBI Taxonomy" id="208964"/>
    <lineage>
        <taxon>Bacteria</taxon>
        <taxon>Pseudomonadati</taxon>
        <taxon>Pseudomonadota</taxon>
        <taxon>Gammaproteobacteria</taxon>
        <taxon>Pseudomonadales</taxon>
        <taxon>Pseudomonadaceae</taxon>
        <taxon>Pseudomonas</taxon>
    </lineage>
</organism>
<name>FTNA_PSEAE</name>
<accession>Q9HWF9</accession>
<accession>O52763</accession>
<evidence type="ECO:0000250" key="1">
    <source>
        <dbReference type="UniProtKB" id="P0A998"/>
    </source>
</evidence>
<evidence type="ECO:0000255" key="2">
    <source>
        <dbReference type="PROSITE-ProRule" id="PRU00085"/>
    </source>
</evidence>
<evidence type="ECO:0000269" key="3">
    <source>
    </source>
</evidence>
<evidence type="ECO:0000269" key="4">
    <source>
    </source>
</evidence>
<evidence type="ECO:0000269" key="5">
    <source>
    </source>
</evidence>
<evidence type="ECO:0000269" key="6">
    <source>
    </source>
</evidence>
<evidence type="ECO:0000269" key="7">
    <source>
    </source>
</evidence>
<evidence type="ECO:0000303" key="8">
    <source>
    </source>
</evidence>
<evidence type="ECO:0000303" key="9">
    <source>
    </source>
</evidence>
<evidence type="ECO:0000303" key="10">
    <source>
    </source>
</evidence>
<evidence type="ECO:0000303" key="11">
    <source>
    </source>
</evidence>
<evidence type="ECO:0000305" key="12">
    <source>
    </source>
</evidence>
<evidence type="ECO:0000305" key="13">
    <source>
    </source>
</evidence>
<evidence type="ECO:0000312" key="14">
    <source>
        <dbReference type="EMBL" id="AAC03119.1"/>
    </source>
</evidence>
<evidence type="ECO:0000312" key="15">
    <source>
        <dbReference type="EMBL" id="AAG07623.1"/>
    </source>
</evidence>
<evidence type="ECO:0007744" key="16">
    <source>
        <dbReference type="PDB" id="3R2H"/>
    </source>
</evidence>
<evidence type="ECO:0007744" key="17">
    <source>
        <dbReference type="PDB" id="3R2K"/>
    </source>
</evidence>
<evidence type="ECO:0007744" key="18">
    <source>
        <dbReference type="PDB" id="3R2L"/>
    </source>
</evidence>
<evidence type="ECO:0007744" key="19">
    <source>
        <dbReference type="PDB" id="3R2M"/>
    </source>
</evidence>
<evidence type="ECO:0007744" key="20">
    <source>
        <dbReference type="PDB" id="3R2O"/>
    </source>
</evidence>
<evidence type="ECO:0007744" key="21">
    <source>
        <dbReference type="PDB" id="3R2R"/>
    </source>
</evidence>
<evidence type="ECO:0007744" key="22">
    <source>
        <dbReference type="PDB" id="3R2S"/>
    </source>
</evidence>
<evidence type="ECO:0007829" key="23">
    <source>
        <dbReference type="PDB" id="3R2K"/>
    </source>
</evidence>